<sequence length="1177" mass="131865">MTGQLVQYGRHRQRRSYARISEVLELPNLIEIQTSSYQWFLDEGLREMFQDISPIEDFTGNLSLEFIDYSLGEPKYSVDECKERDVTYAAPLRVKVRLINKETGEVKEQDVFMGDFPLMTETGTFVINGAERVIVSQLVRSPSVYYSGKVDKNGKRGFTATVIPNRGAWLEYETDAKDVVYVRIDRTRKLPVTVLLRALGFGSDQEITELLGDNEYLSNTLEKDNTDSTEKALLEIYERLRPGEPPTVENAKSLLVSRFFDPKRYDLANVGRYKINKKLHIKNRLFNQRLAETLVDPETGEILAAEGTILDRRTLDRILPYLEKNIGFKTAKPMGGVVEGDVELQSIKIYAPESEGERVINVIGNANITRDVKHITPGDILASISYFFNLLYKVGDTDDIDHLGNRRLRSVGELLQNQFRIGLSRMERVVRERMSIQDTNAITPQALINIRPVIASIKEFFGSSQLSQFMDQTNPLAELTHKRRLSALGPGGLTRERAGFEVRDVHYSHYGRMCPIETPEGPNIGLINSLSSFAKVNEFGFIETPYRRVDPETGLVTGHVDYLTADEEDNYVVAQANMKLSDEGEFLSEDIVARFRGENIVTNRERIDYMDVSPKQVVSAATACIPFLENDDSNRALMGANMQRQAVPLMNPESPIVGTGMEYVSAKDSGAAVICKHPGVVERVEAREVWVRRYVEVDGQTVKGDLDRYKMQKFIRSNQGTCYNQRPIVSVGNEVVKGEILADGPSMELGELALGRNVLVGFMTWDGYNYEDAIIMSERLVKDDVYTSIHIEEYESEARDTKLGPEEITRDIPNVGEDALRNLDERGIIRVGAEVKDGDLLVGKVTPKGVTELTAEERLLHAIFGEKAREVRDTSLRVPHGGGGIILDVKVFNREDGDELPPGVNQLVRAYIVQKRKISEGDKMAGRHGNKGVISRILPEEDMPYLPDGTPIDIMLNPLGVPSRMNIGQVLELHLGMAARYLGIHIATPVFDGAREEDVWGTIEEAGMANDAKTILYDGRTGEPFDNRVSVGVMYMIKLAHMVDDKLHARSTGPYSLVTQQPLGGKAQFGGQRFGEMEVWALEAYGAAYTLQEILTVKSDDVVGRVKTYEAIVKGENVPEPGVPESFKVLIKELQSLGMDVKMMSSDDTEIEMRDTEDDDDHQSADKLNVEVETTKE</sequence>
<organism>
    <name type="scientific">Bacillus cereus (strain G9842)</name>
    <dbReference type="NCBI Taxonomy" id="405531"/>
    <lineage>
        <taxon>Bacteria</taxon>
        <taxon>Bacillati</taxon>
        <taxon>Bacillota</taxon>
        <taxon>Bacilli</taxon>
        <taxon>Bacillales</taxon>
        <taxon>Bacillaceae</taxon>
        <taxon>Bacillus</taxon>
        <taxon>Bacillus cereus group</taxon>
    </lineage>
</organism>
<comment type="function">
    <text evidence="1">DNA-dependent RNA polymerase catalyzes the transcription of DNA into RNA using the four ribonucleoside triphosphates as substrates.</text>
</comment>
<comment type="catalytic activity">
    <reaction evidence="1">
        <text>RNA(n) + a ribonucleoside 5'-triphosphate = RNA(n+1) + diphosphate</text>
        <dbReference type="Rhea" id="RHEA:21248"/>
        <dbReference type="Rhea" id="RHEA-COMP:14527"/>
        <dbReference type="Rhea" id="RHEA-COMP:17342"/>
        <dbReference type="ChEBI" id="CHEBI:33019"/>
        <dbReference type="ChEBI" id="CHEBI:61557"/>
        <dbReference type="ChEBI" id="CHEBI:140395"/>
        <dbReference type="EC" id="2.7.7.6"/>
    </reaction>
</comment>
<comment type="subunit">
    <text evidence="1">The RNAP catalytic core consists of 2 alpha, 1 beta, 1 beta' and 1 omega subunit. When a sigma factor is associated with the core the holoenzyme is formed, which can initiate transcription.</text>
</comment>
<comment type="similarity">
    <text evidence="1">Belongs to the RNA polymerase beta chain family.</text>
</comment>
<gene>
    <name evidence="1" type="primary">rpoB</name>
    <name type="ordered locus">BCG9842_B5203</name>
</gene>
<dbReference type="EC" id="2.7.7.6" evidence="1"/>
<dbReference type="EMBL" id="CP001186">
    <property type="protein sequence ID" value="ACK94186.1"/>
    <property type="molecule type" value="Genomic_DNA"/>
</dbReference>
<dbReference type="RefSeq" id="WP_000147553.1">
    <property type="nucleotide sequence ID" value="NC_011772.1"/>
</dbReference>
<dbReference type="SMR" id="B7IT11"/>
<dbReference type="GeneID" id="72446920"/>
<dbReference type="KEGG" id="bcg:BCG9842_B5203"/>
<dbReference type="HOGENOM" id="CLU_000524_4_1_9"/>
<dbReference type="Proteomes" id="UP000006744">
    <property type="component" value="Chromosome"/>
</dbReference>
<dbReference type="GO" id="GO:0000428">
    <property type="term" value="C:DNA-directed RNA polymerase complex"/>
    <property type="evidence" value="ECO:0007669"/>
    <property type="project" value="UniProtKB-KW"/>
</dbReference>
<dbReference type="GO" id="GO:0003677">
    <property type="term" value="F:DNA binding"/>
    <property type="evidence" value="ECO:0007669"/>
    <property type="project" value="UniProtKB-UniRule"/>
</dbReference>
<dbReference type="GO" id="GO:0003899">
    <property type="term" value="F:DNA-directed RNA polymerase activity"/>
    <property type="evidence" value="ECO:0007669"/>
    <property type="project" value="UniProtKB-UniRule"/>
</dbReference>
<dbReference type="GO" id="GO:0032549">
    <property type="term" value="F:ribonucleoside binding"/>
    <property type="evidence" value="ECO:0007669"/>
    <property type="project" value="InterPro"/>
</dbReference>
<dbReference type="GO" id="GO:0006351">
    <property type="term" value="P:DNA-templated transcription"/>
    <property type="evidence" value="ECO:0007669"/>
    <property type="project" value="UniProtKB-UniRule"/>
</dbReference>
<dbReference type="CDD" id="cd00653">
    <property type="entry name" value="RNA_pol_B_RPB2"/>
    <property type="match status" value="1"/>
</dbReference>
<dbReference type="FunFam" id="3.90.1800.10:FF:000001">
    <property type="entry name" value="DNA-directed RNA polymerase subunit beta"/>
    <property type="match status" value="1"/>
</dbReference>
<dbReference type="Gene3D" id="2.40.50.100">
    <property type="match status" value="1"/>
</dbReference>
<dbReference type="Gene3D" id="2.40.50.150">
    <property type="match status" value="1"/>
</dbReference>
<dbReference type="Gene3D" id="3.90.1100.10">
    <property type="match status" value="2"/>
</dbReference>
<dbReference type="Gene3D" id="2.30.150.10">
    <property type="entry name" value="DNA-directed RNA polymerase, beta subunit, external 1 domain"/>
    <property type="match status" value="1"/>
</dbReference>
<dbReference type="Gene3D" id="2.40.270.10">
    <property type="entry name" value="DNA-directed RNA polymerase, subunit 2, domain 6"/>
    <property type="match status" value="1"/>
</dbReference>
<dbReference type="Gene3D" id="3.90.1800.10">
    <property type="entry name" value="RNA polymerase alpha subunit dimerisation domain"/>
    <property type="match status" value="1"/>
</dbReference>
<dbReference type="Gene3D" id="3.90.1110.10">
    <property type="entry name" value="RNA polymerase Rpb2, domain 2"/>
    <property type="match status" value="1"/>
</dbReference>
<dbReference type="HAMAP" id="MF_01321">
    <property type="entry name" value="RNApol_bact_RpoB"/>
    <property type="match status" value="1"/>
</dbReference>
<dbReference type="InterPro" id="IPR042107">
    <property type="entry name" value="DNA-dir_RNA_pol_bsu_ext_1_sf"/>
</dbReference>
<dbReference type="InterPro" id="IPR019462">
    <property type="entry name" value="DNA-dir_RNA_pol_bsu_external_1"/>
</dbReference>
<dbReference type="InterPro" id="IPR015712">
    <property type="entry name" value="DNA-dir_RNA_pol_su2"/>
</dbReference>
<dbReference type="InterPro" id="IPR007120">
    <property type="entry name" value="DNA-dir_RNAP_su2_dom"/>
</dbReference>
<dbReference type="InterPro" id="IPR037033">
    <property type="entry name" value="DNA-dir_RNAP_su2_hyb_sf"/>
</dbReference>
<dbReference type="InterPro" id="IPR010243">
    <property type="entry name" value="RNA_pol_bsu_bac"/>
</dbReference>
<dbReference type="InterPro" id="IPR007121">
    <property type="entry name" value="RNA_pol_bsu_CS"/>
</dbReference>
<dbReference type="InterPro" id="IPR007644">
    <property type="entry name" value="RNA_pol_bsu_protrusion"/>
</dbReference>
<dbReference type="InterPro" id="IPR007642">
    <property type="entry name" value="RNA_pol_Rpb2_2"/>
</dbReference>
<dbReference type="InterPro" id="IPR037034">
    <property type="entry name" value="RNA_pol_Rpb2_2_sf"/>
</dbReference>
<dbReference type="InterPro" id="IPR007645">
    <property type="entry name" value="RNA_pol_Rpb2_3"/>
</dbReference>
<dbReference type="InterPro" id="IPR007641">
    <property type="entry name" value="RNA_pol_Rpb2_7"/>
</dbReference>
<dbReference type="InterPro" id="IPR014724">
    <property type="entry name" value="RNA_pol_RPB2_OB-fold"/>
</dbReference>
<dbReference type="NCBIfam" id="NF001616">
    <property type="entry name" value="PRK00405.1"/>
    <property type="match status" value="1"/>
</dbReference>
<dbReference type="NCBIfam" id="TIGR02013">
    <property type="entry name" value="rpoB"/>
    <property type="match status" value="1"/>
</dbReference>
<dbReference type="PANTHER" id="PTHR20856">
    <property type="entry name" value="DNA-DIRECTED RNA POLYMERASE I SUBUNIT 2"/>
    <property type="match status" value="1"/>
</dbReference>
<dbReference type="Pfam" id="PF04563">
    <property type="entry name" value="RNA_pol_Rpb2_1"/>
    <property type="match status" value="1"/>
</dbReference>
<dbReference type="Pfam" id="PF04561">
    <property type="entry name" value="RNA_pol_Rpb2_2"/>
    <property type="match status" value="2"/>
</dbReference>
<dbReference type="Pfam" id="PF04565">
    <property type="entry name" value="RNA_pol_Rpb2_3"/>
    <property type="match status" value="1"/>
</dbReference>
<dbReference type="Pfam" id="PF10385">
    <property type="entry name" value="RNA_pol_Rpb2_45"/>
    <property type="match status" value="1"/>
</dbReference>
<dbReference type="Pfam" id="PF00562">
    <property type="entry name" value="RNA_pol_Rpb2_6"/>
    <property type="match status" value="1"/>
</dbReference>
<dbReference type="Pfam" id="PF04560">
    <property type="entry name" value="RNA_pol_Rpb2_7"/>
    <property type="match status" value="1"/>
</dbReference>
<dbReference type="SUPFAM" id="SSF64484">
    <property type="entry name" value="beta and beta-prime subunits of DNA dependent RNA-polymerase"/>
    <property type="match status" value="1"/>
</dbReference>
<dbReference type="PROSITE" id="PS01166">
    <property type="entry name" value="RNA_POL_BETA"/>
    <property type="match status" value="1"/>
</dbReference>
<proteinExistence type="inferred from homology"/>
<reference key="1">
    <citation type="submission" date="2008-10" db="EMBL/GenBank/DDBJ databases">
        <title>Genome sequence of Bacillus cereus G9842.</title>
        <authorList>
            <person name="Dodson R.J."/>
            <person name="Durkin A.S."/>
            <person name="Rosovitz M.J."/>
            <person name="Rasko D.A."/>
            <person name="Hoffmaster A."/>
            <person name="Ravel J."/>
            <person name="Sutton G."/>
        </authorList>
    </citation>
    <scope>NUCLEOTIDE SEQUENCE [LARGE SCALE GENOMIC DNA]</scope>
    <source>
        <strain>G9842</strain>
    </source>
</reference>
<evidence type="ECO:0000255" key="1">
    <source>
        <dbReference type="HAMAP-Rule" id="MF_01321"/>
    </source>
</evidence>
<evidence type="ECO:0000256" key="2">
    <source>
        <dbReference type="SAM" id="MobiDB-lite"/>
    </source>
</evidence>
<keyword id="KW-0240">DNA-directed RNA polymerase</keyword>
<keyword id="KW-0548">Nucleotidyltransferase</keyword>
<keyword id="KW-0804">Transcription</keyword>
<keyword id="KW-0808">Transferase</keyword>
<name>RPOB_BACC2</name>
<feature type="chain" id="PRO_1000141657" description="DNA-directed RNA polymerase subunit beta">
    <location>
        <begin position="1"/>
        <end position="1177"/>
    </location>
</feature>
<feature type="region of interest" description="Disordered" evidence="2">
    <location>
        <begin position="1147"/>
        <end position="1177"/>
    </location>
</feature>
<feature type="compositionally biased region" description="Acidic residues" evidence="2">
    <location>
        <begin position="1147"/>
        <end position="1161"/>
    </location>
</feature>
<feature type="compositionally biased region" description="Basic and acidic residues" evidence="2">
    <location>
        <begin position="1162"/>
        <end position="1177"/>
    </location>
</feature>
<protein>
    <recommendedName>
        <fullName evidence="1">DNA-directed RNA polymerase subunit beta</fullName>
        <shortName evidence="1">RNAP subunit beta</shortName>
        <ecNumber evidence="1">2.7.7.6</ecNumber>
    </recommendedName>
    <alternativeName>
        <fullName evidence="1">RNA polymerase subunit beta</fullName>
    </alternativeName>
    <alternativeName>
        <fullName evidence="1">Transcriptase subunit beta</fullName>
    </alternativeName>
</protein>
<accession>B7IT11</accession>